<accession>B7MHH8</accession>
<evidence type="ECO:0000255" key="1">
    <source>
        <dbReference type="HAMAP-Rule" id="MF_00069"/>
    </source>
</evidence>
<feature type="chain" id="PRO_1000192558" description="Hydroxylamine reductase">
    <location>
        <begin position="1"/>
        <end position="550"/>
    </location>
</feature>
<feature type="binding site" evidence="1">
    <location>
        <position position="3"/>
    </location>
    <ligand>
        <name>[2Fe-2S] cluster</name>
        <dbReference type="ChEBI" id="CHEBI:190135"/>
    </ligand>
</feature>
<feature type="binding site" evidence="1">
    <location>
        <position position="6"/>
    </location>
    <ligand>
        <name>[2Fe-2S] cluster</name>
        <dbReference type="ChEBI" id="CHEBI:190135"/>
    </ligand>
</feature>
<feature type="binding site" evidence="1">
    <location>
        <position position="18"/>
    </location>
    <ligand>
        <name>[2Fe-2S] cluster</name>
        <dbReference type="ChEBI" id="CHEBI:190135"/>
    </ligand>
</feature>
<feature type="binding site" evidence="1">
    <location>
        <position position="25"/>
    </location>
    <ligand>
        <name>[2Fe-2S] cluster</name>
        <dbReference type="ChEBI" id="CHEBI:190135"/>
    </ligand>
</feature>
<feature type="binding site" evidence="1">
    <location>
        <position position="249"/>
    </location>
    <ligand>
        <name>hybrid [4Fe-2O-2S] cluster</name>
        <dbReference type="ChEBI" id="CHEBI:60519"/>
    </ligand>
</feature>
<feature type="binding site" evidence="1">
    <location>
        <position position="273"/>
    </location>
    <ligand>
        <name>hybrid [4Fe-2O-2S] cluster</name>
        <dbReference type="ChEBI" id="CHEBI:60519"/>
    </ligand>
</feature>
<feature type="binding site" evidence="1">
    <location>
        <position position="317"/>
    </location>
    <ligand>
        <name>hybrid [4Fe-2O-2S] cluster</name>
        <dbReference type="ChEBI" id="CHEBI:60519"/>
    </ligand>
</feature>
<feature type="binding site" description="via persulfide group" evidence="1">
    <location>
        <position position="405"/>
    </location>
    <ligand>
        <name>hybrid [4Fe-2O-2S] cluster</name>
        <dbReference type="ChEBI" id="CHEBI:60519"/>
    </ligand>
</feature>
<feature type="binding site" evidence="1">
    <location>
        <position position="433"/>
    </location>
    <ligand>
        <name>hybrid [4Fe-2O-2S] cluster</name>
        <dbReference type="ChEBI" id="CHEBI:60519"/>
    </ligand>
</feature>
<feature type="binding site" evidence="1">
    <location>
        <position position="458"/>
    </location>
    <ligand>
        <name>hybrid [4Fe-2O-2S] cluster</name>
        <dbReference type="ChEBI" id="CHEBI:60519"/>
    </ligand>
</feature>
<feature type="binding site" evidence="1">
    <location>
        <position position="492"/>
    </location>
    <ligand>
        <name>hybrid [4Fe-2O-2S] cluster</name>
        <dbReference type="ChEBI" id="CHEBI:60519"/>
    </ligand>
</feature>
<feature type="binding site" evidence="1">
    <location>
        <position position="494"/>
    </location>
    <ligand>
        <name>hybrid [4Fe-2O-2S] cluster</name>
        <dbReference type="ChEBI" id="CHEBI:60519"/>
    </ligand>
</feature>
<feature type="modified residue" description="Cysteine persulfide" evidence="1">
    <location>
        <position position="405"/>
    </location>
</feature>
<proteinExistence type="inferred from homology"/>
<gene>
    <name evidence="1" type="primary">hcp</name>
    <name type="ordered locus">ECS88_0894</name>
</gene>
<reference key="1">
    <citation type="journal article" date="2009" name="PLoS Genet.">
        <title>Organised genome dynamics in the Escherichia coli species results in highly diverse adaptive paths.</title>
        <authorList>
            <person name="Touchon M."/>
            <person name="Hoede C."/>
            <person name="Tenaillon O."/>
            <person name="Barbe V."/>
            <person name="Baeriswyl S."/>
            <person name="Bidet P."/>
            <person name="Bingen E."/>
            <person name="Bonacorsi S."/>
            <person name="Bouchier C."/>
            <person name="Bouvet O."/>
            <person name="Calteau A."/>
            <person name="Chiapello H."/>
            <person name="Clermont O."/>
            <person name="Cruveiller S."/>
            <person name="Danchin A."/>
            <person name="Diard M."/>
            <person name="Dossat C."/>
            <person name="Karoui M.E."/>
            <person name="Frapy E."/>
            <person name="Garry L."/>
            <person name="Ghigo J.M."/>
            <person name="Gilles A.M."/>
            <person name="Johnson J."/>
            <person name="Le Bouguenec C."/>
            <person name="Lescat M."/>
            <person name="Mangenot S."/>
            <person name="Martinez-Jehanne V."/>
            <person name="Matic I."/>
            <person name="Nassif X."/>
            <person name="Oztas S."/>
            <person name="Petit M.A."/>
            <person name="Pichon C."/>
            <person name="Rouy Z."/>
            <person name="Ruf C.S."/>
            <person name="Schneider D."/>
            <person name="Tourret J."/>
            <person name="Vacherie B."/>
            <person name="Vallenet D."/>
            <person name="Medigue C."/>
            <person name="Rocha E.P.C."/>
            <person name="Denamur E."/>
        </authorList>
    </citation>
    <scope>NUCLEOTIDE SEQUENCE [LARGE SCALE GENOMIC DNA]</scope>
    <source>
        <strain>S88 / ExPEC</strain>
    </source>
</reference>
<name>HCP_ECO45</name>
<organism>
    <name type="scientific">Escherichia coli O45:K1 (strain S88 / ExPEC)</name>
    <dbReference type="NCBI Taxonomy" id="585035"/>
    <lineage>
        <taxon>Bacteria</taxon>
        <taxon>Pseudomonadati</taxon>
        <taxon>Pseudomonadota</taxon>
        <taxon>Gammaproteobacteria</taxon>
        <taxon>Enterobacterales</taxon>
        <taxon>Enterobacteriaceae</taxon>
        <taxon>Escherichia</taxon>
    </lineage>
</organism>
<comment type="function">
    <text evidence="1">Catalyzes the reduction of hydroxylamine to form NH(3) and H(2)O.</text>
</comment>
<comment type="catalytic activity">
    <reaction evidence="1">
        <text>A + NH4(+) + H2O = hydroxylamine + AH2 + H(+)</text>
        <dbReference type="Rhea" id="RHEA:22052"/>
        <dbReference type="ChEBI" id="CHEBI:13193"/>
        <dbReference type="ChEBI" id="CHEBI:15377"/>
        <dbReference type="ChEBI" id="CHEBI:15378"/>
        <dbReference type="ChEBI" id="CHEBI:15429"/>
        <dbReference type="ChEBI" id="CHEBI:17499"/>
        <dbReference type="ChEBI" id="CHEBI:28938"/>
        <dbReference type="EC" id="1.7.99.1"/>
    </reaction>
</comment>
<comment type="cofactor">
    <cofactor evidence="1">
        <name>[2Fe-2S] cluster</name>
        <dbReference type="ChEBI" id="CHEBI:190135"/>
    </cofactor>
    <text evidence="1">Binds 1 [2Fe-2S] cluster.</text>
</comment>
<comment type="cofactor">
    <cofactor evidence="1">
        <name>hybrid [4Fe-2O-2S] cluster</name>
        <dbReference type="ChEBI" id="CHEBI:60519"/>
    </cofactor>
    <text evidence="1">Binds 1 hybrid [4Fe-2O-2S] cluster.</text>
</comment>
<comment type="subcellular location">
    <subcellularLocation>
        <location evidence="1">Cytoplasm</location>
    </subcellularLocation>
</comment>
<comment type="similarity">
    <text evidence="1">Belongs to the HCP family.</text>
</comment>
<keyword id="KW-0001">2Fe-2S</keyword>
<keyword id="KW-0963">Cytoplasm</keyword>
<keyword id="KW-0408">Iron</keyword>
<keyword id="KW-0411">Iron-sulfur</keyword>
<keyword id="KW-0479">Metal-binding</keyword>
<keyword id="KW-0560">Oxidoreductase</keyword>
<keyword id="KW-1185">Reference proteome</keyword>
<protein>
    <recommendedName>
        <fullName evidence="1">Hydroxylamine reductase</fullName>
        <ecNumber evidence="1">1.7.99.1</ecNumber>
    </recommendedName>
    <alternativeName>
        <fullName evidence="1">Hybrid-cluster protein</fullName>
        <shortName evidence="1">HCP</shortName>
    </alternativeName>
    <alternativeName>
        <fullName evidence="1">Prismane protein</fullName>
    </alternativeName>
</protein>
<sequence length="550" mass="60048">MFCVQCEQTIRTPAGNGCSYAQGMCGKTAETSDLQDLLIAALQGLSAWAVKAREYGIINHDVDSFAPRAFFSTLTNVNFDSPRIVGYAREAIALREALKAQCLAVDANARVDNPMADLQLVSDDLGELQRQAAEFTPNKDKAAIGENILGLRLLCLYGLKGAAAYMEHAHVLGQYDNDIYAQYHKIMAWLGTWPADMNALLECSMEIGQMNFKVMSILDAGETGKYGHPTPTQVNVKATAGKCILISGHDLKDLYNLLEQTEGTGVNVYTHGEMLPAHGYPELRKFKHLVGNYGSGWQNQQVEFARFPGPIVMTSNCIIDPTVGAYDDRIWTRSIVGWPGVRHLDGEDFSAVIAQAQQMAGFPYSEIPHLITVGFGRQTLLGAADTLIDLVSREKLRHIFLLGGCDGARGERHYFTDFATSVPDDCLILTLACGKYRFNKLEFGDIEGLPRLVDAGQCNDAYSAIILAVTLAEKLGCGVNDLPLSLVLSWFEQKAIVILLTLLSLGVKNIVTGPTAPGFLTPDLLAVLNEKFGLRSITTVEEDMKQLLSA</sequence>
<dbReference type="EC" id="1.7.99.1" evidence="1"/>
<dbReference type="EMBL" id="CU928161">
    <property type="protein sequence ID" value="CAR02229.1"/>
    <property type="molecule type" value="Genomic_DNA"/>
</dbReference>
<dbReference type="RefSeq" id="WP_000458817.1">
    <property type="nucleotide sequence ID" value="NC_011742.1"/>
</dbReference>
<dbReference type="SMR" id="B7MHH8"/>
<dbReference type="GeneID" id="75202475"/>
<dbReference type="KEGG" id="ecz:ECS88_0894"/>
<dbReference type="HOGENOM" id="CLU_038344_2_0_6"/>
<dbReference type="Proteomes" id="UP000000747">
    <property type="component" value="Chromosome"/>
</dbReference>
<dbReference type="GO" id="GO:0005737">
    <property type="term" value="C:cytoplasm"/>
    <property type="evidence" value="ECO:0007669"/>
    <property type="project" value="UniProtKB-SubCell"/>
</dbReference>
<dbReference type="GO" id="GO:0051537">
    <property type="term" value="F:2 iron, 2 sulfur cluster binding"/>
    <property type="evidence" value="ECO:0007669"/>
    <property type="project" value="UniProtKB-KW"/>
</dbReference>
<dbReference type="GO" id="GO:0050418">
    <property type="term" value="F:hydroxylamine reductase activity"/>
    <property type="evidence" value="ECO:0007669"/>
    <property type="project" value="UniProtKB-UniRule"/>
</dbReference>
<dbReference type="GO" id="GO:0046872">
    <property type="term" value="F:metal ion binding"/>
    <property type="evidence" value="ECO:0007669"/>
    <property type="project" value="UniProtKB-KW"/>
</dbReference>
<dbReference type="GO" id="GO:0004601">
    <property type="term" value="F:peroxidase activity"/>
    <property type="evidence" value="ECO:0007669"/>
    <property type="project" value="TreeGrafter"/>
</dbReference>
<dbReference type="GO" id="GO:0042542">
    <property type="term" value="P:response to hydrogen peroxide"/>
    <property type="evidence" value="ECO:0007669"/>
    <property type="project" value="TreeGrafter"/>
</dbReference>
<dbReference type="CDD" id="cd01914">
    <property type="entry name" value="HCP"/>
    <property type="match status" value="1"/>
</dbReference>
<dbReference type="FunFam" id="1.20.1270.20:FF:000001">
    <property type="entry name" value="Hydroxylamine reductase"/>
    <property type="match status" value="1"/>
</dbReference>
<dbReference type="FunFam" id="1.20.1270.20:FF:000002">
    <property type="entry name" value="Hydroxylamine reductase"/>
    <property type="match status" value="1"/>
</dbReference>
<dbReference type="FunFam" id="3.40.50.2030:FF:000001">
    <property type="entry name" value="Hydroxylamine reductase"/>
    <property type="match status" value="1"/>
</dbReference>
<dbReference type="FunFam" id="3.40.50.2030:FF:000002">
    <property type="entry name" value="Hydroxylamine reductase"/>
    <property type="match status" value="1"/>
</dbReference>
<dbReference type="Gene3D" id="1.20.1270.20">
    <property type="match status" value="2"/>
</dbReference>
<dbReference type="Gene3D" id="3.40.50.2030">
    <property type="match status" value="2"/>
</dbReference>
<dbReference type="HAMAP" id="MF_00069">
    <property type="entry name" value="Hydroxylam_reduct"/>
    <property type="match status" value="1"/>
</dbReference>
<dbReference type="InterPro" id="IPR004137">
    <property type="entry name" value="HCP/CODH"/>
</dbReference>
<dbReference type="InterPro" id="IPR010048">
    <property type="entry name" value="Hydroxylam_reduct"/>
</dbReference>
<dbReference type="InterPro" id="IPR016099">
    <property type="entry name" value="Prismane-like_a/b-sand"/>
</dbReference>
<dbReference type="InterPro" id="IPR011254">
    <property type="entry name" value="Prismane-like_sf"/>
</dbReference>
<dbReference type="InterPro" id="IPR016100">
    <property type="entry name" value="Prismane_a-bundle"/>
</dbReference>
<dbReference type="NCBIfam" id="TIGR01703">
    <property type="entry name" value="hybrid_clust"/>
    <property type="match status" value="1"/>
</dbReference>
<dbReference type="NCBIfam" id="NF003658">
    <property type="entry name" value="PRK05290.1"/>
    <property type="match status" value="1"/>
</dbReference>
<dbReference type="PANTHER" id="PTHR30109">
    <property type="entry name" value="HYDROXYLAMINE REDUCTASE"/>
    <property type="match status" value="1"/>
</dbReference>
<dbReference type="PANTHER" id="PTHR30109:SF0">
    <property type="entry name" value="HYDROXYLAMINE REDUCTASE"/>
    <property type="match status" value="1"/>
</dbReference>
<dbReference type="Pfam" id="PF03063">
    <property type="entry name" value="Prismane"/>
    <property type="match status" value="1"/>
</dbReference>
<dbReference type="PIRSF" id="PIRSF000076">
    <property type="entry name" value="HCP"/>
    <property type="match status" value="1"/>
</dbReference>
<dbReference type="SUPFAM" id="SSF56821">
    <property type="entry name" value="Prismane protein-like"/>
    <property type="match status" value="1"/>
</dbReference>